<reference key="1">
    <citation type="journal article" date="1998" name="Science">
        <title>Genome sequence of an obligate intracellular pathogen of humans: Chlamydia trachomatis.</title>
        <authorList>
            <person name="Stephens R.S."/>
            <person name="Kalman S."/>
            <person name="Lammel C.J."/>
            <person name="Fan J."/>
            <person name="Marathe R."/>
            <person name="Aravind L."/>
            <person name="Mitchell W.P."/>
            <person name="Olinger L."/>
            <person name="Tatusov R.L."/>
            <person name="Zhao Q."/>
            <person name="Koonin E.V."/>
            <person name="Davis R.W."/>
        </authorList>
    </citation>
    <scope>NUCLEOTIDE SEQUENCE [LARGE SCALE GENOMIC DNA]</scope>
    <source>
        <strain>ATCC VR-885 / DSM 19411 / UW-3/Cx</strain>
    </source>
</reference>
<feature type="chain" id="PRO_0000216823" description="UPF0242 protein CT_616">
    <location>
        <begin position="1"/>
        <end position="429"/>
    </location>
</feature>
<accession>O84621</accession>
<proteinExistence type="inferred from homology"/>
<sequence>MQYVMGRTNSMTRGFLNKRRVLEKCRTAKQKIHYCISRYFHYLPPVLAILLPIGSWPFLSEQQWWYGSFLFPVVSSLGWLFAIGRRERQLRAAAGQLLEAKIRKLTEQDEGLKNIRETIEKRQKETDRLKLHNDKLVEQLGQAREVFIQAKGRYDHMEELSRRLKEENQQLQIQLEAAVRERNEKILENQELLQELKETLAYQQELHDEYQATFVEQHSMLDKRQAYIGNLEAKVQDLMCELRNLLQLEMGAKTNLPGKPVASRDVVAQLVLEFRKIVFRVETTEAADSLTALRYTRTDPSAHNYSLACRQLFDGLREENLGMLFIYAPFAQRVLFANALFNDWTGYGLEDFLNRESDVVLEGFAQWERDLLTESRVERSGKIVIKTKAFGATPFYYCVVTLDKGPFAQHILGVLYPAKASFFTNLSYI</sequence>
<gene>
    <name type="ordered locus">CT_616</name>
</gene>
<organism>
    <name type="scientific">Chlamydia trachomatis serovar D (strain ATCC VR-885 / DSM 19411 / UW-3/Cx)</name>
    <dbReference type="NCBI Taxonomy" id="272561"/>
    <lineage>
        <taxon>Bacteria</taxon>
        <taxon>Pseudomonadati</taxon>
        <taxon>Chlamydiota</taxon>
        <taxon>Chlamydiia</taxon>
        <taxon>Chlamydiales</taxon>
        <taxon>Chlamydiaceae</taxon>
        <taxon>Chlamydia/Chlamydophila group</taxon>
        <taxon>Chlamydia</taxon>
    </lineage>
</organism>
<evidence type="ECO:0000305" key="1"/>
<comment type="similarity">
    <text evidence="1">Belongs to the UPF0242 family.</text>
</comment>
<dbReference type="EMBL" id="AE001273">
    <property type="protein sequence ID" value="AAC68220.1"/>
    <property type="molecule type" value="Genomic_DNA"/>
</dbReference>
<dbReference type="PIR" id="H71491">
    <property type="entry name" value="H71491"/>
</dbReference>
<dbReference type="RefSeq" id="NP_220133.1">
    <property type="nucleotide sequence ID" value="NC_000117.1"/>
</dbReference>
<dbReference type="RefSeq" id="WP_009871984.1">
    <property type="nucleotide sequence ID" value="NC_000117.1"/>
</dbReference>
<dbReference type="SMR" id="O84621"/>
<dbReference type="STRING" id="272561.CT_616"/>
<dbReference type="EnsemblBacteria" id="AAC68220">
    <property type="protein sequence ID" value="AAC68220"/>
    <property type="gene ID" value="CT_616"/>
</dbReference>
<dbReference type="GeneID" id="884396"/>
<dbReference type="KEGG" id="ctr:CT_616"/>
<dbReference type="PATRIC" id="fig|272561.5.peg.673"/>
<dbReference type="HOGENOM" id="CLU_058964_0_0_0"/>
<dbReference type="InParanoid" id="O84621"/>
<dbReference type="OrthoDB" id="18689at2"/>
<dbReference type="Proteomes" id="UP000000431">
    <property type="component" value="Chromosome"/>
</dbReference>
<dbReference type="InterPro" id="IPR009623">
    <property type="entry name" value="UPF0242_N"/>
</dbReference>
<dbReference type="InterPro" id="IPR040578">
    <property type="entry name" value="UPF0242_PAS"/>
</dbReference>
<dbReference type="Pfam" id="PF18095">
    <property type="entry name" value="PAS_12"/>
    <property type="match status" value="1"/>
</dbReference>
<dbReference type="Pfam" id="PF06785">
    <property type="entry name" value="UPF0242"/>
    <property type="match status" value="1"/>
</dbReference>
<keyword id="KW-1185">Reference proteome</keyword>
<protein>
    <recommendedName>
        <fullName>UPF0242 protein CT_616</fullName>
    </recommendedName>
</protein>
<name>Y616_CHLTR</name>